<dbReference type="EC" id="7.1.1.-" evidence="1"/>
<dbReference type="EMBL" id="EF380354">
    <property type="protein sequence ID" value="ABQ52563.1"/>
    <property type="molecule type" value="Genomic_DNA"/>
</dbReference>
<dbReference type="SMR" id="P0CC74"/>
<dbReference type="GO" id="GO:0009535">
    <property type="term" value="C:chloroplast thylakoid membrane"/>
    <property type="evidence" value="ECO:0007669"/>
    <property type="project" value="UniProtKB-SubCell"/>
</dbReference>
<dbReference type="GO" id="GO:0008137">
    <property type="term" value="F:NADH dehydrogenase (ubiquinone) activity"/>
    <property type="evidence" value="ECO:0007669"/>
    <property type="project" value="InterPro"/>
</dbReference>
<dbReference type="GO" id="GO:0048038">
    <property type="term" value="F:quinone binding"/>
    <property type="evidence" value="ECO:0007669"/>
    <property type="project" value="UniProtKB-KW"/>
</dbReference>
<dbReference type="GO" id="GO:0042773">
    <property type="term" value="P:ATP synthesis coupled electron transport"/>
    <property type="evidence" value="ECO:0007669"/>
    <property type="project" value="InterPro"/>
</dbReference>
<dbReference type="GO" id="GO:0019684">
    <property type="term" value="P:photosynthesis, light reaction"/>
    <property type="evidence" value="ECO:0007669"/>
    <property type="project" value="UniProtKB-UniRule"/>
</dbReference>
<dbReference type="HAMAP" id="MF_00445">
    <property type="entry name" value="NDH1_NuoN_1"/>
    <property type="match status" value="1"/>
</dbReference>
<dbReference type="InterPro" id="IPR010096">
    <property type="entry name" value="NADH-Q_OxRdtase_suN/2"/>
</dbReference>
<dbReference type="InterPro" id="IPR001750">
    <property type="entry name" value="ND/Mrp_TM"/>
</dbReference>
<dbReference type="InterPro" id="IPR045693">
    <property type="entry name" value="Ndh2_N"/>
</dbReference>
<dbReference type="NCBIfam" id="TIGR01770">
    <property type="entry name" value="NDH_I_N"/>
    <property type="match status" value="1"/>
</dbReference>
<dbReference type="NCBIfam" id="NF002701">
    <property type="entry name" value="PRK02504.1"/>
    <property type="match status" value="1"/>
</dbReference>
<dbReference type="PANTHER" id="PTHR22773">
    <property type="entry name" value="NADH DEHYDROGENASE"/>
    <property type="match status" value="1"/>
</dbReference>
<dbReference type="Pfam" id="PF19530">
    <property type="entry name" value="Ndh2_N"/>
    <property type="match status" value="1"/>
</dbReference>
<dbReference type="Pfam" id="PF00361">
    <property type="entry name" value="Proton_antipo_M"/>
    <property type="match status" value="1"/>
</dbReference>
<dbReference type="PRINTS" id="PR01434">
    <property type="entry name" value="NADHDHGNASE5"/>
</dbReference>
<reference key="1">
    <citation type="journal article" date="2007" name="Mol. Phylogenet. Evol.">
        <title>Phylogenetic and evolutionary implications of complete chloroplast genome sequences of four early-diverging angiosperms: Buxus (Buxaceae), Chloranthus (Chloranthaceae), Dioscorea (Dioscoreaceae), and Illicium (Schisandraceae).</title>
        <authorList>
            <person name="Hansen D.R."/>
            <person name="Dastidar S.G."/>
            <person name="Cai Z."/>
            <person name="Penaflor C."/>
            <person name="Kuehl J.V."/>
            <person name="Boore J.L."/>
            <person name="Jansen R.K."/>
        </authorList>
    </citation>
    <scope>NUCLEOTIDE SEQUENCE [LARGE SCALE GENOMIC DNA]</scope>
</reference>
<comment type="function">
    <text evidence="1">NDH shuttles electrons from NAD(P)H:plastoquinone, via FMN and iron-sulfur (Fe-S) centers, to quinones in the photosynthetic chain and possibly in a chloroplast respiratory chain. The immediate electron acceptor for the enzyme in this species is believed to be plastoquinone. Couples the redox reaction to proton translocation, and thus conserves the redox energy in a proton gradient.</text>
</comment>
<comment type="catalytic activity">
    <reaction evidence="1">
        <text>a plastoquinone + NADH + (n+1) H(+)(in) = a plastoquinol + NAD(+) + n H(+)(out)</text>
        <dbReference type="Rhea" id="RHEA:42608"/>
        <dbReference type="Rhea" id="RHEA-COMP:9561"/>
        <dbReference type="Rhea" id="RHEA-COMP:9562"/>
        <dbReference type="ChEBI" id="CHEBI:15378"/>
        <dbReference type="ChEBI" id="CHEBI:17757"/>
        <dbReference type="ChEBI" id="CHEBI:57540"/>
        <dbReference type="ChEBI" id="CHEBI:57945"/>
        <dbReference type="ChEBI" id="CHEBI:62192"/>
    </reaction>
</comment>
<comment type="catalytic activity">
    <reaction evidence="1">
        <text>a plastoquinone + NADPH + (n+1) H(+)(in) = a plastoquinol + NADP(+) + n H(+)(out)</text>
        <dbReference type="Rhea" id="RHEA:42612"/>
        <dbReference type="Rhea" id="RHEA-COMP:9561"/>
        <dbReference type="Rhea" id="RHEA-COMP:9562"/>
        <dbReference type="ChEBI" id="CHEBI:15378"/>
        <dbReference type="ChEBI" id="CHEBI:17757"/>
        <dbReference type="ChEBI" id="CHEBI:57783"/>
        <dbReference type="ChEBI" id="CHEBI:58349"/>
        <dbReference type="ChEBI" id="CHEBI:62192"/>
    </reaction>
</comment>
<comment type="subunit">
    <text evidence="1">NDH is composed of at least 16 different subunits, 5 of which are encoded in the nucleus.</text>
</comment>
<comment type="subcellular location">
    <subcellularLocation>
        <location evidence="1">Plastid</location>
        <location evidence="1">Chloroplast thylakoid membrane</location>
        <topology evidence="1">Multi-pass membrane protein</topology>
    </subcellularLocation>
</comment>
<comment type="similarity">
    <text evidence="1">Belongs to the complex I subunit 2 family.</text>
</comment>
<comment type="caution">
    <text evidence="2">This protein is smaller than usual in this organism, and may not be functional.</text>
</comment>
<gene>
    <name evidence="1" type="primary">ndhB1</name>
</gene>
<protein>
    <recommendedName>
        <fullName evidence="1">NAD(P)H-quinone oxidoreductase subunit 2 A, chloroplastic</fullName>
        <ecNumber evidence="1">7.1.1.-</ecNumber>
    </recommendedName>
    <alternativeName>
        <fullName evidence="1">NAD(P)H dehydrogenase, subunit 2 A</fullName>
    </alternativeName>
    <alternativeName>
        <fullName evidence="1">NADH-plastoquinone oxidoreductase subunit 2 A</fullName>
    </alternativeName>
</protein>
<feature type="chain" id="PRO_0000344268" description="NAD(P)H-quinone oxidoreductase subunit 2 A, chloroplastic">
    <location>
        <begin position="1"/>
        <end position="492"/>
    </location>
</feature>
<feature type="transmembrane region" description="Helical" evidence="1">
    <location>
        <begin position="6"/>
        <end position="26"/>
    </location>
</feature>
<feature type="transmembrane region" description="Helical" evidence="1">
    <location>
        <begin position="39"/>
        <end position="59"/>
    </location>
</feature>
<feature type="transmembrane region" description="Helical" evidence="1">
    <location>
        <begin position="81"/>
        <end position="101"/>
    </location>
</feature>
<feature type="transmembrane region" description="Helical" evidence="1">
    <location>
        <begin position="106"/>
        <end position="126"/>
    </location>
</feature>
<feature type="transmembrane region" description="Helical" evidence="1">
    <location>
        <begin position="131"/>
        <end position="151"/>
    </location>
</feature>
<feature type="transmembrane region" description="Helical" evidence="1">
    <location>
        <begin position="165"/>
        <end position="185"/>
    </location>
</feature>
<feature type="transmembrane region" description="Helical" evidence="1">
    <location>
        <begin position="209"/>
        <end position="229"/>
    </location>
</feature>
<feature type="transmembrane region" description="Helical" evidence="1">
    <location>
        <begin position="277"/>
        <end position="297"/>
    </location>
</feature>
<feature type="transmembrane region" description="Helical" evidence="1">
    <location>
        <begin position="305"/>
        <end position="325"/>
    </location>
</feature>
<feature type="transmembrane region" description="Helical" evidence="1">
    <location>
        <begin position="329"/>
        <end position="349"/>
    </location>
</feature>
<feature type="transmembrane region" description="Helical" evidence="1">
    <location>
        <begin position="377"/>
        <end position="397"/>
    </location>
</feature>
<feature type="transmembrane region" description="Helical" evidence="1">
    <location>
        <begin position="400"/>
        <end position="420"/>
    </location>
</feature>
<feature type="transmembrane region" description="Helical" evidence="1">
    <location>
        <begin position="466"/>
        <end position="486"/>
    </location>
</feature>
<evidence type="ECO:0000255" key="1">
    <source>
        <dbReference type="HAMAP-Rule" id="MF_00445"/>
    </source>
</evidence>
<evidence type="ECO:0000305" key="2"/>
<sequence>MKAFHLLLFHGSFIFPECILIFGLILLLMIDSTSDQKDTPWLYFISSTSLVMSITALLFRWREEPMISFSGNFQTNNFNEVFQFLILLCSTLCIPLSVEYIECTEMAITEFLLFVLTATLGGMFLCGANDLITIFVAPECFSLCSYLLSGYTKRDVRSNEATTKYLLMGGASSSILVHGFSWLYGSSGGEIELQEILNGLINTQMYNSPGISIALISITVGIGFKLSPAPSHQWTPDVYEGSPTPVVAFLSVTSKVAASASATRIFDIPFYFSSNEWHLLLEILAILSMILGNLIAITQTSMKRMLAYSSIGQIGYVIIGIIVGDSNDGYASMITYMLFYISMNLGTFARIVSFGPRTGTDNIRDYAGLYTKDPFLALSSALCLLSLGGIPPLAGFFGKLHLFWCGWQAGLYFLVSIGLLTSVVSIYYYLKIIKLLMTGRNKEITPHVRNYRRSPLRSNNSIELSMIVCVIASTIPGISMNPIIAIAQDTLF</sequence>
<geneLocation type="chloroplast"/>
<name>NU2C1_ILLOL</name>
<proteinExistence type="inferred from homology"/>
<keyword id="KW-0150">Chloroplast</keyword>
<keyword id="KW-0472">Membrane</keyword>
<keyword id="KW-0520">NAD</keyword>
<keyword id="KW-0521">NADP</keyword>
<keyword id="KW-0934">Plastid</keyword>
<keyword id="KW-0618">Plastoquinone</keyword>
<keyword id="KW-0874">Quinone</keyword>
<keyword id="KW-0793">Thylakoid</keyword>
<keyword id="KW-1278">Translocase</keyword>
<keyword id="KW-0812">Transmembrane</keyword>
<keyword id="KW-1133">Transmembrane helix</keyword>
<keyword id="KW-0813">Transport</keyword>
<organism>
    <name type="scientific">Illicium oligandrum</name>
    <name type="common">Star anise</name>
    <dbReference type="NCBI Taxonomy" id="145286"/>
    <lineage>
        <taxon>Eukaryota</taxon>
        <taxon>Viridiplantae</taxon>
        <taxon>Streptophyta</taxon>
        <taxon>Embryophyta</taxon>
        <taxon>Tracheophyta</taxon>
        <taxon>Spermatophyta</taxon>
        <taxon>Magnoliopsida</taxon>
        <taxon>Austrobaileyales</taxon>
        <taxon>Schisandraceae</taxon>
        <taxon>Illicium</taxon>
    </lineage>
</organism>
<accession>P0CC74</accession>
<accession>A6MMY9</accession>